<proteinExistence type="evidence at protein level"/>
<organism>
    <name type="scientific">Dictyostelium discoideum</name>
    <name type="common">Social amoeba</name>
    <dbReference type="NCBI Taxonomy" id="44689"/>
    <lineage>
        <taxon>Eukaryota</taxon>
        <taxon>Amoebozoa</taxon>
        <taxon>Evosea</taxon>
        <taxon>Eumycetozoa</taxon>
        <taxon>Dictyostelia</taxon>
        <taxon>Dictyosteliales</taxon>
        <taxon>Dictyosteliaceae</taxon>
        <taxon>Dictyostelium</taxon>
    </lineage>
</organism>
<sequence length="460" mass="47166">MKVLSALCVLLVSVATAKQQLSEVEYRNAFTNWMIAHQRHYSSEEFNGRYNIFKANMDYVNEWNTKGSETVLGLNVFADISNEEYRATYLGTPFDASSLEMTESDKIFDASAQVDWRTQGAVTPIKNQGQCGGCWSFSTTGATEGAQYLANGKKNLVSLSEQNLIDCSGSYGNNGCEGGLMTLAFEYIINNKGIDTESSYPYTAEDGKKCKFNPKNVAAQLSSYVNVTSGSESDLAAKVTQGPTSVAIDASNQSFQLYVSGIYNEPACSSTQLDHGVLAVGFGTGSGSSGSHGGSQSQSAGSDSQSAGSESSQSESGSQSQSESGSQSQSQSGSQSFSGSLYSGSYSGSQSGSQSGNSGAAVKQTGAGSGSGSGSGSGSGSGSGSVSGSASGSASGSASGSSSGSNSNGGVYPTAGDYWIVKNSWGTSWGMDGYILMTKGNNNQCGIATMASRPTAVASL</sequence>
<accession>Q94504</accession>
<accession>Q54X57</accession>
<evidence type="ECO:0000250" key="1"/>
<evidence type="ECO:0000255" key="2"/>
<evidence type="ECO:0000255" key="3">
    <source>
        <dbReference type="PROSITE-ProRule" id="PRU10088"/>
    </source>
</evidence>
<evidence type="ECO:0000255" key="4">
    <source>
        <dbReference type="PROSITE-ProRule" id="PRU10089"/>
    </source>
</evidence>
<evidence type="ECO:0000255" key="5">
    <source>
        <dbReference type="PROSITE-ProRule" id="PRU10090"/>
    </source>
</evidence>
<evidence type="ECO:0000256" key="6">
    <source>
        <dbReference type="SAM" id="MobiDB-lite"/>
    </source>
</evidence>
<evidence type="ECO:0000269" key="7">
    <source>
    </source>
</evidence>
<evidence type="ECO:0000305" key="8"/>
<protein>
    <recommendedName>
        <fullName>Cysteine proteinase 7</fullName>
        <ecNumber>3.4.22.-</ecNumber>
    </recommendedName>
    <alternativeName>
        <fullName>Proteinase 1</fullName>
    </alternativeName>
</protein>
<dbReference type="EC" id="3.4.22.-"/>
<dbReference type="EMBL" id="U72746">
    <property type="protein sequence ID" value="AAC47482.1"/>
    <property type="molecule type" value="mRNA"/>
</dbReference>
<dbReference type="EMBL" id="AAFI02000030">
    <property type="protein sequence ID" value="EAL67742.2"/>
    <property type="molecule type" value="Genomic_DNA"/>
</dbReference>
<dbReference type="RefSeq" id="XP_641720.2">
    <property type="nucleotide sequence ID" value="XM_636628.2"/>
</dbReference>
<dbReference type="SMR" id="Q94504"/>
<dbReference type="FunCoup" id="Q94504">
    <property type="interactions" value="73"/>
</dbReference>
<dbReference type="STRING" id="44689.Q94504"/>
<dbReference type="MEROPS" id="C01.081"/>
<dbReference type="GlyCosmos" id="Q94504">
    <property type="glycosylation" value="2 sites, No reported glycans"/>
</dbReference>
<dbReference type="GlyGen" id="Q94504">
    <property type="glycosylation" value="3 sites"/>
</dbReference>
<dbReference type="PaxDb" id="44689-DDB0215005"/>
<dbReference type="ABCD" id="Q94504">
    <property type="antibodies" value="1 sequenced antibody"/>
</dbReference>
<dbReference type="EnsemblProtists" id="EAL67742">
    <property type="protein sequence ID" value="EAL67742"/>
    <property type="gene ID" value="DDB_G0279187"/>
</dbReference>
<dbReference type="GeneID" id="8621915"/>
<dbReference type="KEGG" id="ddi:DDB_G0279187"/>
<dbReference type="dictyBase" id="DDB_G0279187">
    <property type="gene designation" value="cprG"/>
</dbReference>
<dbReference type="VEuPathDB" id="AmoebaDB:DDB_G0279187"/>
<dbReference type="eggNOG" id="KOG1543">
    <property type="taxonomic scope" value="Eukaryota"/>
</dbReference>
<dbReference type="HOGENOM" id="CLU_012184_1_2_1"/>
<dbReference type="InParanoid" id="Q94504"/>
<dbReference type="OMA" id="ANHEFAQ"/>
<dbReference type="PhylomeDB" id="Q94504"/>
<dbReference type="Reactome" id="R-DDI-1474228">
    <property type="pathway name" value="Degradation of the extracellular matrix"/>
</dbReference>
<dbReference type="Reactome" id="R-DDI-2132295">
    <property type="pathway name" value="MHC class II antigen presentation"/>
</dbReference>
<dbReference type="Reactome" id="R-DDI-6798695">
    <property type="pathway name" value="Neutrophil degranulation"/>
</dbReference>
<dbReference type="PRO" id="PR:Q94504"/>
<dbReference type="Proteomes" id="UP000002195">
    <property type="component" value="Chromosome 3"/>
</dbReference>
<dbReference type="GO" id="GO:0005615">
    <property type="term" value="C:extracellular space"/>
    <property type="evidence" value="ECO:0000318"/>
    <property type="project" value="GO_Central"/>
</dbReference>
<dbReference type="GO" id="GO:0005764">
    <property type="term" value="C:lysosome"/>
    <property type="evidence" value="ECO:0007669"/>
    <property type="project" value="UniProtKB-SubCell"/>
</dbReference>
<dbReference type="GO" id="GO:0004197">
    <property type="term" value="F:cysteine-type endopeptidase activity"/>
    <property type="evidence" value="ECO:0000318"/>
    <property type="project" value="GO_Central"/>
</dbReference>
<dbReference type="GO" id="GO:0008234">
    <property type="term" value="F:cysteine-type peptidase activity"/>
    <property type="evidence" value="ECO:0000314"/>
    <property type="project" value="dictyBase"/>
</dbReference>
<dbReference type="GO" id="GO:0006955">
    <property type="term" value="P:immune response"/>
    <property type="evidence" value="ECO:0000318"/>
    <property type="project" value="GO_Central"/>
</dbReference>
<dbReference type="GO" id="GO:2001235">
    <property type="term" value="P:positive regulation of apoptotic signaling pathway"/>
    <property type="evidence" value="ECO:0000318"/>
    <property type="project" value="GO_Central"/>
</dbReference>
<dbReference type="GO" id="GO:0051603">
    <property type="term" value="P:proteolysis involved in protein catabolic process"/>
    <property type="evidence" value="ECO:0000318"/>
    <property type="project" value="GO_Central"/>
</dbReference>
<dbReference type="CDD" id="cd02248">
    <property type="entry name" value="Peptidase_C1A"/>
    <property type="match status" value="1"/>
</dbReference>
<dbReference type="FunFam" id="2.40.50.170:FF:000001">
    <property type="entry name" value="Cathepsin L1"/>
    <property type="match status" value="1"/>
</dbReference>
<dbReference type="FunFam" id="3.90.70.10:FF:000039">
    <property type="entry name" value="Cysteine proteinase 2, putative"/>
    <property type="match status" value="1"/>
</dbReference>
<dbReference type="Gene3D" id="3.90.70.10">
    <property type="entry name" value="Cysteine proteinases"/>
    <property type="match status" value="1"/>
</dbReference>
<dbReference type="Gene3D" id="2.40.50.170">
    <property type="entry name" value="Cysteine proteinases. Chain C"/>
    <property type="match status" value="1"/>
</dbReference>
<dbReference type="InterPro" id="IPR038765">
    <property type="entry name" value="Papain-like_cys_pep_sf"/>
</dbReference>
<dbReference type="InterPro" id="IPR025661">
    <property type="entry name" value="Pept_asp_AS"/>
</dbReference>
<dbReference type="InterPro" id="IPR000169">
    <property type="entry name" value="Pept_cys_AS"/>
</dbReference>
<dbReference type="InterPro" id="IPR025660">
    <property type="entry name" value="Pept_his_AS"/>
</dbReference>
<dbReference type="InterPro" id="IPR013128">
    <property type="entry name" value="Peptidase_C1A"/>
</dbReference>
<dbReference type="InterPro" id="IPR000668">
    <property type="entry name" value="Peptidase_C1A_C"/>
</dbReference>
<dbReference type="InterPro" id="IPR039417">
    <property type="entry name" value="Peptidase_C1A_papain-like"/>
</dbReference>
<dbReference type="InterPro" id="IPR013201">
    <property type="entry name" value="Prot_inhib_I29"/>
</dbReference>
<dbReference type="PANTHER" id="PTHR12411">
    <property type="entry name" value="CYSTEINE PROTEASE FAMILY C1-RELATED"/>
    <property type="match status" value="1"/>
</dbReference>
<dbReference type="Pfam" id="PF08246">
    <property type="entry name" value="Inhibitor_I29"/>
    <property type="match status" value="1"/>
</dbReference>
<dbReference type="Pfam" id="PF00112">
    <property type="entry name" value="Peptidase_C1"/>
    <property type="match status" value="2"/>
</dbReference>
<dbReference type="PRINTS" id="PR00705">
    <property type="entry name" value="PAPAIN"/>
</dbReference>
<dbReference type="SMART" id="SM00848">
    <property type="entry name" value="Inhibitor_I29"/>
    <property type="match status" value="1"/>
</dbReference>
<dbReference type="SMART" id="SM00645">
    <property type="entry name" value="Pept_C1"/>
    <property type="match status" value="1"/>
</dbReference>
<dbReference type="SUPFAM" id="SSF54001">
    <property type="entry name" value="Cysteine proteinases"/>
    <property type="match status" value="1"/>
</dbReference>
<dbReference type="PROSITE" id="PS00640">
    <property type="entry name" value="THIOL_PROTEASE_ASN"/>
    <property type="match status" value="1"/>
</dbReference>
<dbReference type="PROSITE" id="PS00139">
    <property type="entry name" value="THIOL_PROTEASE_CYS"/>
    <property type="match status" value="1"/>
</dbReference>
<dbReference type="PROSITE" id="PS00639">
    <property type="entry name" value="THIOL_PROTEASE_HIS"/>
    <property type="match status" value="1"/>
</dbReference>
<feature type="signal peptide" evidence="2">
    <location>
        <begin position="1"/>
        <end position="17"/>
    </location>
</feature>
<feature type="propeptide" id="PRO_0000026366" description="Activation peptide" evidence="2">
    <location>
        <begin position="18"/>
        <end position="111"/>
    </location>
</feature>
<feature type="chain" id="PRO_0000026367" description="Cysteine proteinase 7">
    <location>
        <begin position="112"/>
        <end position="460"/>
    </location>
</feature>
<feature type="region of interest" description="Disordered" evidence="6">
    <location>
        <begin position="285"/>
        <end position="409"/>
    </location>
</feature>
<feature type="compositionally biased region" description="Low complexity" evidence="6">
    <location>
        <begin position="294"/>
        <end position="359"/>
    </location>
</feature>
<feature type="compositionally biased region" description="Gly residues" evidence="6">
    <location>
        <begin position="367"/>
        <end position="385"/>
    </location>
</feature>
<feature type="compositionally biased region" description="Low complexity" evidence="6">
    <location>
        <begin position="386"/>
        <end position="409"/>
    </location>
</feature>
<feature type="active site" evidence="1">
    <location>
        <position position="134"/>
    </location>
</feature>
<feature type="active site" evidence="1">
    <location>
        <position position="275"/>
    </location>
</feature>
<feature type="active site" evidence="1">
    <location>
        <position position="423"/>
    </location>
</feature>
<feature type="glycosylation site" description="N-linked (GlcNAc...) asparagine" evidence="2">
    <location>
        <position position="226"/>
    </location>
</feature>
<feature type="glycosylation site" description="N-linked (GlcNAc...) asparagine" evidence="2">
    <location>
        <position position="252"/>
    </location>
</feature>
<feature type="disulfide bond" evidence="1">
    <location>
        <begin position="131"/>
        <end position="176"/>
    </location>
</feature>
<feature type="disulfide bond" evidence="1">
    <location>
        <begin position="167"/>
        <end position="210"/>
    </location>
</feature>
<feature type="disulfide bond" evidence="1">
    <location>
        <begin position="268"/>
        <end position="445"/>
    </location>
</feature>
<gene>
    <name type="primary">cprG</name>
    <name type="synonym">CP7</name>
    <name type="ORF">DDB_G0279187</name>
</gene>
<comment type="subcellular location">
    <subcellularLocation>
        <location evidence="8">Lysosome</location>
    </subcellularLocation>
</comment>
<comment type="developmental stage">
    <text evidence="7">Present in the vegetative phase and decreases with the start development.</text>
</comment>
<comment type="PTM">
    <text evidence="7">Glycosylated; contains GlcNAc-alpha-1-P-Ser residues. Also N-glycosylated.</text>
</comment>
<comment type="similarity">
    <text evidence="3 4 5">Belongs to the peptidase C1 family.</text>
</comment>
<name>CYSP7_DICDI</name>
<reference key="1">
    <citation type="journal article" date="1997" name="Arch. Biochem. Biophys.">
        <title>The cysteine proteinase gene cprG in Dictyostelium discoideum has a serine-rich domain that contains GlcNAc-1-P.</title>
        <authorList>
            <person name="Ord T."/>
            <person name="Adessi C."/>
            <person name="Wang L."/>
            <person name="Freeze H.H."/>
        </authorList>
    </citation>
    <scope>NUCLEOTIDE SEQUENCE [MRNA]</scope>
    <scope>GLYCOSYLATION</scope>
    <scope>DEVELOPMENTAL STAGE</scope>
    <source>
        <strain>AX2</strain>
    </source>
</reference>
<reference key="2">
    <citation type="journal article" date="2005" name="Nature">
        <title>The genome of the social amoeba Dictyostelium discoideum.</title>
        <authorList>
            <person name="Eichinger L."/>
            <person name="Pachebat J.A."/>
            <person name="Gloeckner G."/>
            <person name="Rajandream M.A."/>
            <person name="Sucgang R."/>
            <person name="Berriman M."/>
            <person name="Song J."/>
            <person name="Olsen R."/>
            <person name="Szafranski K."/>
            <person name="Xu Q."/>
            <person name="Tunggal B."/>
            <person name="Kummerfeld S."/>
            <person name="Madera M."/>
            <person name="Konfortov B.A."/>
            <person name="Rivero F."/>
            <person name="Bankier A.T."/>
            <person name="Lehmann R."/>
            <person name="Hamlin N."/>
            <person name="Davies R."/>
            <person name="Gaudet P."/>
            <person name="Fey P."/>
            <person name="Pilcher K."/>
            <person name="Chen G."/>
            <person name="Saunders D."/>
            <person name="Sodergren E.J."/>
            <person name="Davis P."/>
            <person name="Kerhornou A."/>
            <person name="Nie X."/>
            <person name="Hall N."/>
            <person name="Anjard C."/>
            <person name="Hemphill L."/>
            <person name="Bason N."/>
            <person name="Farbrother P."/>
            <person name="Desany B."/>
            <person name="Just E."/>
            <person name="Morio T."/>
            <person name="Rost R."/>
            <person name="Churcher C.M."/>
            <person name="Cooper J."/>
            <person name="Haydock S."/>
            <person name="van Driessche N."/>
            <person name="Cronin A."/>
            <person name="Goodhead I."/>
            <person name="Muzny D.M."/>
            <person name="Mourier T."/>
            <person name="Pain A."/>
            <person name="Lu M."/>
            <person name="Harper D."/>
            <person name="Lindsay R."/>
            <person name="Hauser H."/>
            <person name="James K.D."/>
            <person name="Quiles M."/>
            <person name="Madan Babu M."/>
            <person name="Saito T."/>
            <person name="Buchrieser C."/>
            <person name="Wardroper A."/>
            <person name="Felder M."/>
            <person name="Thangavelu M."/>
            <person name="Johnson D."/>
            <person name="Knights A."/>
            <person name="Loulseged H."/>
            <person name="Mungall K.L."/>
            <person name="Oliver K."/>
            <person name="Price C."/>
            <person name="Quail M.A."/>
            <person name="Urushihara H."/>
            <person name="Hernandez J."/>
            <person name="Rabbinowitsch E."/>
            <person name="Steffen D."/>
            <person name="Sanders M."/>
            <person name="Ma J."/>
            <person name="Kohara Y."/>
            <person name="Sharp S."/>
            <person name="Simmonds M.N."/>
            <person name="Spiegler S."/>
            <person name="Tivey A."/>
            <person name="Sugano S."/>
            <person name="White B."/>
            <person name="Walker D."/>
            <person name="Woodward J.R."/>
            <person name="Winckler T."/>
            <person name="Tanaka Y."/>
            <person name="Shaulsky G."/>
            <person name="Schleicher M."/>
            <person name="Weinstock G.M."/>
            <person name="Rosenthal A."/>
            <person name="Cox E.C."/>
            <person name="Chisholm R.L."/>
            <person name="Gibbs R.A."/>
            <person name="Loomis W.F."/>
            <person name="Platzer M."/>
            <person name="Kay R.R."/>
            <person name="Williams J.G."/>
            <person name="Dear P.H."/>
            <person name="Noegel A.A."/>
            <person name="Barrell B.G."/>
            <person name="Kuspa A."/>
        </authorList>
    </citation>
    <scope>NUCLEOTIDE SEQUENCE [LARGE SCALE GENOMIC DNA]</scope>
    <source>
        <strain>AX4</strain>
    </source>
</reference>
<keyword id="KW-1015">Disulfide bond</keyword>
<keyword id="KW-0325">Glycoprotein</keyword>
<keyword id="KW-0378">Hydrolase</keyword>
<keyword id="KW-0458">Lysosome</keyword>
<keyword id="KW-0597">Phosphoprotein</keyword>
<keyword id="KW-0645">Protease</keyword>
<keyword id="KW-1185">Reference proteome</keyword>
<keyword id="KW-0732">Signal</keyword>
<keyword id="KW-0788">Thiol protease</keyword>
<keyword id="KW-0865">Zymogen</keyword>